<name>DOP_ACIC1</name>
<feature type="chain" id="PRO_0000424323" description="Depupylase">
    <location>
        <begin position="1"/>
        <end position="503"/>
    </location>
</feature>
<feature type="active site" description="Proton acceptor" evidence="4">
    <location>
        <position position="94"/>
    </location>
</feature>
<feature type="binding site" evidence="2">
    <location>
        <position position="8"/>
    </location>
    <ligand>
        <name>Mg(2+)</name>
        <dbReference type="ChEBI" id="CHEBI:18420"/>
        <label>1</label>
    </ligand>
</feature>
<feature type="binding site" evidence="2">
    <location>
        <position position="8"/>
    </location>
    <ligand>
        <name>Mg(2+)</name>
        <dbReference type="ChEBI" id="CHEBI:18420"/>
        <label>2</label>
    </ligand>
</feature>
<feature type="binding site" evidence="2">
    <location>
        <position position="92"/>
    </location>
    <ligand>
        <name>Mg(2+)</name>
        <dbReference type="ChEBI" id="CHEBI:18420"/>
        <label>1</label>
    </ligand>
</feature>
<feature type="binding site" evidence="2">
    <location>
        <position position="99"/>
    </location>
    <ligand>
        <name>Mg(2+)</name>
        <dbReference type="ChEBI" id="CHEBI:18420"/>
        <label>1</label>
    </ligand>
</feature>
<feature type="binding site" evidence="2">
    <location>
        <begin position="101"/>
        <end position="102"/>
    </location>
    <ligand>
        <name>ATP</name>
        <dbReference type="ChEBI" id="CHEBI:30616"/>
    </ligand>
</feature>
<feature type="binding site" evidence="2">
    <location>
        <position position="155"/>
    </location>
    <ligand>
        <name>Mg(2+)</name>
        <dbReference type="ChEBI" id="CHEBI:18420"/>
        <label>2</label>
    </ligand>
</feature>
<feature type="binding site" evidence="2">
    <location>
        <position position="157"/>
    </location>
    <ligand>
        <name>ATP</name>
        <dbReference type="ChEBI" id="CHEBI:30616"/>
    </ligand>
</feature>
<feature type="binding site" evidence="2">
    <location>
        <position position="239"/>
    </location>
    <ligand>
        <name>ATP</name>
        <dbReference type="ChEBI" id="CHEBI:30616"/>
    </ligand>
</feature>
<feature type="binding site" evidence="2">
    <location>
        <position position="241"/>
    </location>
    <ligand>
        <name>Mg(2+)</name>
        <dbReference type="ChEBI" id="CHEBI:18420"/>
        <label>2</label>
    </ligand>
</feature>
<feature type="mutagenesis site" description="Abolishes depupylation and deamidation activities." evidence="2">
    <original>E</original>
    <variation>A</variation>
    <location>
        <position position="8"/>
    </location>
</feature>
<feature type="mutagenesis site" description="Abolishes depupylation and deamidation activities." evidence="2">
    <original>E</original>
    <variation>A</variation>
    <location>
        <position position="10"/>
    </location>
</feature>
<feature type="mutagenesis site" description="Reduces depupylation but not deamidation activity." evidence="2">
    <original>Y</original>
    <variation>A</variation>
    <location>
        <position position="92"/>
    </location>
</feature>
<feature type="mutagenesis site" description="Abolishes depupylation and deamidation activities." evidence="2">
    <original>D</original>
    <variation>A</variation>
    <location>
        <position position="94"/>
    </location>
</feature>
<feature type="mutagenesis site" description="Reduces depupylation but not deamidation activity." evidence="2">
    <original>H</original>
    <variation>A</variation>
    <location>
        <position position="97"/>
    </location>
</feature>
<feature type="mutagenesis site" description="Abolishes depupylation." evidence="2">
    <original>Q</original>
    <variation>E</variation>
    <location>
        <position position="139"/>
    </location>
</feature>
<feature type="mutagenesis site" description="Abolishes depupylation but not deamidation activity." evidence="2">
    <original>H</original>
    <variation>A</variation>
    <location>
        <position position="155"/>
    </location>
</feature>
<feature type="mutagenesis site" description="Impairs depupylation and significantly slows deamidation." evidence="2">
    <original>R</original>
    <variation>A</variation>
    <location>
        <position position="205"/>
    </location>
</feature>
<feature type="mutagenesis site" description="Abolishes depupylation and deamidation activities." evidence="2">
    <original>R</original>
    <variation>A</variation>
    <location>
        <position position="221"/>
    </location>
</feature>
<feature type="mutagenesis site" description="Abolishes depupylation and deamidation activities." evidence="2">
    <original>H</original>
    <variation>A</variation>
    <location>
        <position position="241"/>
    </location>
</feature>
<feature type="mutagenesis site" description="Abolishes depupylation." evidence="2">
    <original>R</original>
    <variation>E</variation>
    <location>
        <position position="400"/>
    </location>
</feature>
<feature type="strand" evidence="6">
    <location>
        <begin position="5"/>
        <end position="10"/>
    </location>
</feature>
<feature type="strand" evidence="6">
    <location>
        <begin position="12"/>
        <end position="14"/>
    </location>
</feature>
<feature type="helix" evidence="6">
    <location>
        <begin position="23"/>
        <end position="34"/>
    </location>
</feature>
<feature type="helix" evidence="6">
    <location>
        <begin position="35"/>
        <end position="37"/>
    </location>
</feature>
<feature type="strand" evidence="6">
    <location>
        <begin position="38"/>
        <end position="41"/>
    </location>
</feature>
<feature type="strand" evidence="7">
    <location>
        <begin position="45"/>
        <end position="47"/>
    </location>
</feature>
<feature type="helix" evidence="6">
    <location>
        <begin position="48"/>
        <end position="52"/>
    </location>
</feature>
<feature type="helix" evidence="6">
    <location>
        <begin position="75"/>
        <end position="78"/>
    </location>
</feature>
<feature type="strand" evidence="6">
    <location>
        <begin position="82"/>
        <end position="85"/>
    </location>
</feature>
<feature type="strand" evidence="6">
    <location>
        <begin position="90"/>
        <end position="94"/>
    </location>
</feature>
<feature type="strand" evidence="6">
    <location>
        <begin position="97"/>
        <end position="101"/>
    </location>
</feature>
<feature type="strand" evidence="6">
    <location>
        <begin position="105"/>
        <end position="107"/>
    </location>
</feature>
<feature type="helix" evidence="6">
    <location>
        <begin position="108"/>
        <end position="131"/>
    </location>
</feature>
<feature type="strand" evidence="5">
    <location>
        <begin position="132"/>
        <end position="134"/>
    </location>
</feature>
<feature type="strand" evidence="6">
    <location>
        <begin position="139"/>
        <end position="141"/>
    </location>
</feature>
<feature type="strand" evidence="6">
    <location>
        <begin position="143"/>
        <end position="145"/>
    </location>
</feature>
<feature type="strand" evidence="6">
    <location>
        <begin position="147"/>
        <end position="149"/>
    </location>
</feature>
<feature type="strand" evidence="6">
    <location>
        <begin position="154"/>
        <end position="161"/>
    </location>
</feature>
<feature type="helix" evidence="6">
    <location>
        <begin position="166"/>
        <end position="179"/>
    </location>
</feature>
<feature type="helix" evidence="6">
    <location>
        <begin position="181"/>
        <end position="184"/>
    </location>
</feature>
<feature type="strand" evidence="6">
    <location>
        <begin position="188"/>
        <end position="192"/>
    </location>
</feature>
<feature type="strand" evidence="6">
    <location>
        <begin position="197"/>
        <end position="202"/>
    </location>
</feature>
<feature type="helix" evidence="6">
    <location>
        <begin position="206"/>
        <end position="208"/>
    </location>
</feature>
<feature type="strand" evidence="6">
    <location>
        <begin position="209"/>
        <end position="215"/>
    </location>
</feature>
<feature type="strand" evidence="6">
    <location>
        <begin position="217"/>
        <end position="225"/>
    </location>
</feature>
<feature type="turn" evidence="6">
    <location>
        <begin position="234"/>
        <end position="236"/>
    </location>
</feature>
<feature type="strand" evidence="6">
    <location>
        <begin position="237"/>
        <end position="242"/>
    </location>
</feature>
<feature type="helix" evidence="6">
    <location>
        <begin position="251"/>
        <end position="269"/>
    </location>
</feature>
<feature type="strand" evidence="6">
    <location>
        <begin position="279"/>
        <end position="281"/>
    </location>
</feature>
<feature type="helix" evidence="6">
    <location>
        <begin position="282"/>
        <end position="290"/>
    </location>
</feature>
<feature type="strand" evidence="6">
    <location>
        <begin position="298"/>
        <end position="301"/>
    </location>
</feature>
<feature type="strand" evidence="6">
    <location>
        <begin position="306"/>
        <end position="308"/>
    </location>
</feature>
<feature type="helix" evidence="6">
    <location>
        <begin position="309"/>
        <end position="328"/>
    </location>
</feature>
<feature type="helix" evidence="7">
    <location>
        <begin position="329"/>
        <end position="331"/>
    </location>
</feature>
<feature type="helix" evidence="6">
    <location>
        <begin position="334"/>
        <end position="352"/>
    </location>
</feature>
<feature type="helix" evidence="6">
    <location>
        <begin position="354"/>
        <end position="357"/>
    </location>
</feature>
<feature type="turn" evidence="6">
    <location>
        <begin position="358"/>
        <end position="360"/>
    </location>
</feature>
<feature type="helix" evidence="6">
    <location>
        <begin position="362"/>
        <end position="377"/>
    </location>
</feature>
<feature type="helix" evidence="6">
    <location>
        <begin position="384"/>
        <end position="392"/>
    </location>
</feature>
<feature type="turn" evidence="6">
    <location>
        <begin position="398"/>
        <end position="400"/>
    </location>
</feature>
<feature type="helix" evidence="6">
    <location>
        <begin position="402"/>
        <end position="408"/>
    </location>
</feature>
<feature type="helix" evidence="6">
    <location>
        <begin position="418"/>
        <end position="424"/>
    </location>
</feature>
<feature type="strand" evidence="6">
    <location>
        <begin position="430"/>
        <end position="432"/>
    </location>
</feature>
<feature type="helix" evidence="6">
    <location>
        <begin position="434"/>
        <end position="443"/>
    </location>
</feature>
<feature type="helix" evidence="6">
    <location>
        <begin position="445"/>
        <end position="447"/>
    </location>
</feature>
<feature type="strand" evidence="6">
    <location>
        <begin position="448"/>
        <end position="452"/>
    </location>
</feature>
<feature type="strand" evidence="6">
    <location>
        <begin position="455"/>
        <end position="458"/>
    </location>
</feature>
<feature type="strand" evidence="6">
    <location>
        <begin position="467"/>
        <end position="470"/>
    </location>
</feature>
<feature type="strand" evidence="7">
    <location>
        <begin position="476"/>
        <end position="478"/>
    </location>
</feature>
<feature type="helix" evidence="6">
    <location>
        <begin position="479"/>
        <end position="488"/>
    </location>
</feature>
<feature type="helix" evidence="6">
    <location>
        <begin position="492"/>
        <end position="499"/>
    </location>
</feature>
<sequence>MHRVMGIETEYGISVPHQPNANAMAASSQVVNAYAPIGAPAQRQARWDFEEENPLRDARGFEVAREAADPSQLTDEDLGLANVILTNGARLYVDHAHPEYSTPEVTNPRDAVLWDKAGERIMAEAARRAADLPMGWTIQLYKNNTDNKGASYGCHENYLMNRSTPFADIVRHLIPFFVTRQVFCGAGRVGIGADGRGEGFQLSQRADFFEVEVGLETTLKRPIINTRDEPHADPEKYRRLHVIIGDANMSEIATYLKLGTTALVLAMIEDGFLSQDFSVESPVGALRAVSHDPTLRYQLRLHDGRRLTAVQLQMEYLEQARKYVEDRFGTDVDDMTRDVLDRWETTLVRLADDPMQLSRDLDWVAKLSILEGYRQRENLPWSAHKLQLVDLQYHDVRPDRGLYNRLVARGRMNLLVDEAAVRTAMHEPPNDTRAYFRGRCLAKFGAEIAAASWDSVIFDLPGRDSLQRVPTLEPLRGTRAHVGDLLDRCRSATELVAALTGGR</sequence>
<proteinExistence type="evidence at protein level"/>
<organism>
    <name type="scientific">Acidothermus cellulolyticus (strain ATCC 43068 / DSM 8971 / 11B)</name>
    <dbReference type="NCBI Taxonomy" id="351607"/>
    <lineage>
        <taxon>Bacteria</taxon>
        <taxon>Bacillati</taxon>
        <taxon>Actinomycetota</taxon>
        <taxon>Actinomycetes</taxon>
        <taxon>Acidothermales</taxon>
        <taxon>Acidothermaceae</taxon>
        <taxon>Acidothermus</taxon>
    </lineage>
</organism>
<accession>A0LU48</accession>
<reference key="1">
    <citation type="journal article" date="2009" name="Genome Res.">
        <title>Complete genome of the cellulolytic thermophile Acidothermus cellulolyticus 11B provides insights into its ecophysiological and evolutionary adaptations.</title>
        <authorList>
            <person name="Barabote R.D."/>
            <person name="Xie G."/>
            <person name="Leu D.H."/>
            <person name="Normand P."/>
            <person name="Necsulea A."/>
            <person name="Daubin V."/>
            <person name="Medigue C."/>
            <person name="Adney W.S."/>
            <person name="Xu X.C."/>
            <person name="Lapidus A."/>
            <person name="Parales R.E."/>
            <person name="Detter C."/>
            <person name="Pujic P."/>
            <person name="Bruce D."/>
            <person name="Lavire C."/>
            <person name="Challacombe J.F."/>
            <person name="Brettin T.S."/>
            <person name="Berry A.M."/>
        </authorList>
    </citation>
    <scope>NUCLEOTIDE SEQUENCE [LARGE SCALE GENOMIC DNA]</scope>
    <source>
        <strain>ATCC 43068 / DSM 8971 / 11B</strain>
    </source>
</reference>
<reference key="2">
    <citation type="journal article" date="2012" name="Nat. Commun.">
        <title>Structures of Pup ligase PafA and depupylase Dop from the prokaryotic ubiquitin-like modification pathway.</title>
        <authorList>
            <person name="Ozcelik D."/>
            <person name="Barandun J."/>
            <person name="Schmitz N."/>
            <person name="Sutter M."/>
            <person name="Guth E."/>
            <person name="Damberger F.F."/>
            <person name="Allain F.H."/>
            <person name="Ban N."/>
            <person name="Weber-Ban E."/>
        </authorList>
    </citation>
    <scope>X-RAY CRYSTALLOGRAPHY (2.60 ANGSTROMS) OF 1-501 OF APOENZYME AND IN COMPLEX WITH ATP AND MAGNESIUM</scope>
    <scope>FUNCTION</scope>
    <scope>CATALYTIC ACTIVITY</scope>
    <scope>ACTIVE SITE</scope>
    <scope>MUTAGENESIS OF GLU-8; GLU-10; TYR-92; ASP-94; HIS-97; GLN-139; HIS-155; ARG-205; ARG-221; HIS-241 AND ARG-400</scope>
    <source>
        <strain>ATCC 43068 / DSM 8971 / 11B</strain>
    </source>
</reference>
<gene>
    <name type="primary">dop</name>
    <name type="ordered locus">Acel_1186</name>
</gene>
<evidence type="ECO:0000250" key="1"/>
<evidence type="ECO:0000269" key="2">
    <source>
    </source>
</evidence>
<evidence type="ECO:0000305" key="3"/>
<evidence type="ECO:0000305" key="4">
    <source>
    </source>
</evidence>
<evidence type="ECO:0007829" key="5">
    <source>
        <dbReference type="PDB" id="4B0R"/>
    </source>
</evidence>
<evidence type="ECO:0007829" key="6">
    <source>
        <dbReference type="PDB" id="7OXV"/>
    </source>
</evidence>
<evidence type="ECO:0007829" key="7">
    <source>
        <dbReference type="PDB" id="7OXY"/>
    </source>
</evidence>
<comment type="function">
    <text evidence="2">Displays depupylase (DPUP) activity, removing conjugated Pup from target proteins; is thus involved in the recycling of Pup and may function similarly to deubiquitinases (DUBs) in eukaryotes to prevent or promote proteasomal degradation of certain proteins. Is also able to catalyze the deamidation of the C-terminal glutamine to glutamate in a variant of the prokaryotic ubiquitin-like protein Pup; however, since Pup from A.cellulolyticus possesses a C-terminal glutamate, this deamidase activity may be of no significance in vivo.</text>
</comment>
<comment type="cofactor">
    <cofactor evidence="1">
        <name>ATP</name>
        <dbReference type="ChEBI" id="CHEBI:30616"/>
    </cofactor>
    <text evidence="1">ATP is required for the deamidation and depupylation reactions but is not hydrolyzed during the reactions.</text>
</comment>
<comment type="pathway">
    <text>Protein degradation; proteasomal Pup-dependent pathway.</text>
</comment>
<comment type="subunit">
    <text evidence="2">Likely interacts with the C-terminal half of the prokaryotic ubiquitin-like protein Pup.</text>
</comment>
<comment type="similarity">
    <text evidence="3">Belongs to the Pup ligase/Pup deamidase family. Pup deamidase subfamily.</text>
</comment>
<dbReference type="EC" id="3.4.-.-"/>
<dbReference type="EMBL" id="CP000481">
    <property type="protein sequence ID" value="ABK52958.1"/>
    <property type="molecule type" value="Genomic_DNA"/>
</dbReference>
<dbReference type="PDB" id="4B0R">
    <property type="method" value="X-ray"/>
    <property type="resolution" value="2.60 A"/>
    <property type="chains" value="A=1-501"/>
</dbReference>
<dbReference type="PDB" id="4B0S">
    <property type="method" value="X-ray"/>
    <property type="resolution" value="2.85 A"/>
    <property type="chains" value="A=1-501"/>
</dbReference>
<dbReference type="PDB" id="5LRT">
    <property type="method" value="X-ray"/>
    <property type="resolution" value="1.85 A"/>
    <property type="chains" value="A=1-502"/>
</dbReference>
<dbReference type="PDB" id="7OXV">
    <property type="method" value="X-ray"/>
    <property type="resolution" value="1.39 A"/>
    <property type="chains" value="A=1-502"/>
</dbReference>
<dbReference type="PDB" id="7OXY">
    <property type="method" value="X-ray"/>
    <property type="resolution" value="1.65 A"/>
    <property type="chains" value="A=1-502"/>
</dbReference>
<dbReference type="PDB" id="7OY3">
    <property type="method" value="X-ray"/>
    <property type="resolution" value="1.78 A"/>
    <property type="chains" value="A=1-502"/>
</dbReference>
<dbReference type="PDB" id="7OYF">
    <property type="method" value="X-ray"/>
    <property type="resolution" value="1.88 A"/>
    <property type="chains" value="A=1-502"/>
</dbReference>
<dbReference type="PDB" id="7OYH">
    <property type="method" value="X-ray"/>
    <property type="resolution" value="1.75 A"/>
    <property type="chains" value="A=1-502"/>
</dbReference>
<dbReference type="PDBsum" id="4B0R"/>
<dbReference type="PDBsum" id="4B0S"/>
<dbReference type="PDBsum" id="5LRT"/>
<dbReference type="PDBsum" id="7OXV"/>
<dbReference type="PDBsum" id="7OXY"/>
<dbReference type="PDBsum" id="7OY3"/>
<dbReference type="PDBsum" id="7OYF"/>
<dbReference type="PDBsum" id="7OYH"/>
<dbReference type="SMR" id="A0LU48"/>
<dbReference type="STRING" id="351607.Acel_1186"/>
<dbReference type="MEROPS" id="U72.001"/>
<dbReference type="KEGG" id="ace:Acel_1186"/>
<dbReference type="eggNOG" id="COG4122">
    <property type="taxonomic scope" value="Bacteria"/>
</dbReference>
<dbReference type="HOGENOM" id="CLU_040524_1_0_11"/>
<dbReference type="InParanoid" id="A0LU48"/>
<dbReference type="BRENDA" id="3.5.1.119">
    <property type="organism ID" value="9545"/>
</dbReference>
<dbReference type="UniPathway" id="UPA00997"/>
<dbReference type="EvolutionaryTrace" id="A0LU48"/>
<dbReference type="Proteomes" id="UP000008221">
    <property type="component" value="Chromosome"/>
</dbReference>
<dbReference type="GO" id="GO:0005524">
    <property type="term" value="F:ATP binding"/>
    <property type="evidence" value="ECO:0007669"/>
    <property type="project" value="UniProtKB-KW"/>
</dbReference>
<dbReference type="GO" id="GO:0016811">
    <property type="term" value="F:hydrolase activity, acting on carbon-nitrogen (but not peptide) bonds, in linear amides"/>
    <property type="evidence" value="ECO:0007669"/>
    <property type="project" value="InterPro"/>
</dbReference>
<dbReference type="GO" id="GO:0046872">
    <property type="term" value="F:metal ion binding"/>
    <property type="evidence" value="ECO:0007669"/>
    <property type="project" value="UniProtKB-KW"/>
</dbReference>
<dbReference type="GO" id="GO:0008233">
    <property type="term" value="F:peptidase activity"/>
    <property type="evidence" value="ECO:0007669"/>
    <property type="project" value="InterPro"/>
</dbReference>
<dbReference type="GO" id="GO:0019941">
    <property type="term" value="P:modification-dependent protein catabolic process"/>
    <property type="evidence" value="ECO:0007669"/>
    <property type="project" value="InterPro"/>
</dbReference>
<dbReference type="GO" id="GO:0010498">
    <property type="term" value="P:proteasomal protein catabolic process"/>
    <property type="evidence" value="ECO:0007669"/>
    <property type="project" value="InterPro"/>
</dbReference>
<dbReference type="GO" id="GO:0070490">
    <property type="term" value="P:protein pupylation"/>
    <property type="evidence" value="ECO:0007669"/>
    <property type="project" value="TreeGrafter"/>
</dbReference>
<dbReference type="DisProt" id="DP02322"/>
<dbReference type="InterPro" id="IPR022366">
    <property type="entry name" value="Pup_deamidase"/>
</dbReference>
<dbReference type="InterPro" id="IPR004347">
    <property type="entry name" value="Pup_ligase/deamidase"/>
</dbReference>
<dbReference type="NCBIfam" id="TIGR03688">
    <property type="entry name" value="depupylase_Dop"/>
    <property type="match status" value="1"/>
</dbReference>
<dbReference type="PANTHER" id="PTHR42307">
    <property type="entry name" value="PUP DEAMIDASE/DEPUPYLASE"/>
    <property type="match status" value="1"/>
</dbReference>
<dbReference type="PANTHER" id="PTHR42307:SF2">
    <property type="entry name" value="PUP DEAMIDASE_DEPUPYLASE"/>
    <property type="match status" value="1"/>
</dbReference>
<dbReference type="Pfam" id="PF03136">
    <property type="entry name" value="Pup_ligase"/>
    <property type="match status" value="1"/>
</dbReference>
<dbReference type="PIRSF" id="PIRSF018077">
    <property type="entry name" value="UCP018077"/>
    <property type="match status" value="1"/>
</dbReference>
<keyword id="KW-0002">3D-structure</keyword>
<keyword id="KW-0067">ATP-binding</keyword>
<keyword id="KW-0378">Hydrolase</keyword>
<keyword id="KW-0460">Magnesium</keyword>
<keyword id="KW-0479">Metal-binding</keyword>
<keyword id="KW-0547">Nucleotide-binding</keyword>
<keyword id="KW-1185">Reference proteome</keyword>
<protein>
    <recommendedName>
        <fullName>Depupylase</fullName>
        <ecNumber>3.4.-.-</ecNumber>
    </recommendedName>
</protein>